<proteinExistence type="inferred from homology"/>
<comment type="function">
    <text evidence="1">One of the proteins required for the normal export of preproteins out of the cell cytoplasm. It is a molecular chaperone that binds to a subset of precursor proteins, maintaining them in a translocation-competent state. It also specifically binds to its receptor SecA.</text>
</comment>
<comment type="subunit">
    <text evidence="1">Homotetramer, a dimer of dimers. One homotetramer interacts with 1 SecA dimer.</text>
</comment>
<comment type="subcellular location">
    <subcellularLocation>
        <location evidence="1">Cytoplasm</location>
    </subcellularLocation>
</comment>
<comment type="similarity">
    <text evidence="1">Belongs to the SecB family.</text>
</comment>
<name>SECB_PSESM</name>
<organism>
    <name type="scientific">Pseudomonas syringae pv. tomato (strain ATCC BAA-871 / DC3000)</name>
    <dbReference type="NCBI Taxonomy" id="223283"/>
    <lineage>
        <taxon>Bacteria</taxon>
        <taxon>Pseudomonadati</taxon>
        <taxon>Pseudomonadota</taxon>
        <taxon>Gammaproteobacteria</taxon>
        <taxon>Pseudomonadales</taxon>
        <taxon>Pseudomonadaceae</taxon>
        <taxon>Pseudomonas</taxon>
    </lineage>
</organism>
<sequence>MTDQPNNGAVANEENGPQFSLQRIYVRDLSFEAPKSPAIFRQEWTPTVSLDLNTRQKPLEGDFYEVVLTLSVTVNNGEEVAFIVEVQQAGIFLIKGLDDAAMSHTLGAFCPNILFPYAREAIDNLVVRGSFPALMLAPVNFDALYAQELQRMQEAGETPMPTVQ</sequence>
<feature type="chain" id="PRO_0000055401" description="Protein-export protein SecB">
    <location>
        <begin position="1"/>
        <end position="164"/>
    </location>
</feature>
<reference key="1">
    <citation type="journal article" date="2003" name="Proc. Natl. Acad. Sci. U.S.A.">
        <title>The complete genome sequence of the Arabidopsis and tomato pathogen Pseudomonas syringae pv. tomato DC3000.</title>
        <authorList>
            <person name="Buell C.R."/>
            <person name="Joardar V."/>
            <person name="Lindeberg M."/>
            <person name="Selengut J."/>
            <person name="Paulsen I.T."/>
            <person name="Gwinn M.L."/>
            <person name="Dodson R.J."/>
            <person name="DeBoy R.T."/>
            <person name="Durkin A.S."/>
            <person name="Kolonay J.F."/>
            <person name="Madupu R."/>
            <person name="Daugherty S.C."/>
            <person name="Brinkac L.M."/>
            <person name="Beanan M.J."/>
            <person name="Haft D.H."/>
            <person name="Nelson W.C."/>
            <person name="Davidsen T.M."/>
            <person name="Zafar N."/>
            <person name="Zhou L."/>
            <person name="Liu J."/>
            <person name="Yuan Q."/>
            <person name="Khouri H.M."/>
            <person name="Fedorova N.B."/>
            <person name="Tran B."/>
            <person name="Russell D."/>
            <person name="Berry K.J."/>
            <person name="Utterback T.R."/>
            <person name="Van Aken S.E."/>
            <person name="Feldblyum T.V."/>
            <person name="D'Ascenzo M."/>
            <person name="Deng W.-L."/>
            <person name="Ramos A.R."/>
            <person name="Alfano J.R."/>
            <person name="Cartinhour S."/>
            <person name="Chatterjee A.K."/>
            <person name="Delaney T.P."/>
            <person name="Lazarowitz S.G."/>
            <person name="Martin G.B."/>
            <person name="Schneider D.J."/>
            <person name="Tang X."/>
            <person name="Bender C.L."/>
            <person name="White O."/>
            <person name="Fraser C.M."/>
            <person name="Collmer A."/>
        </authorList>
    </citation>
    <scope>NUCLEOTIDE SEQUENCE [LARGE SCALE GENOMIC DNA]</scope>
    <source>
        <strain>ATCC BAA-871 / DC3000</strain>
    </source>
</reference>
<evidence type="ECO:0000255" key="1">
    <source>
        <dbReference type="HAMAP-Rule" id="MF_00821"/>
    </source>
</evidence>
<gene>
    <name evidence="1" type="primary">secB</name>
    <name type="ordered locus">PSPTO_5324</name>
</gene>
<dbReference type="EMBL" id="AE016853">
    <property type="protein sequence ID" value="AAO58750.1"/>
    <property type="molecule type" value="Genomic_DNA"/>
</dbReference>
<dbReference type="RefSeq" id="NP_795055.1">
    <property type="nucleotide sequence ID" value="NC_004578.1"/>
</dbReference>
<dbReference type="RefSeq" id="WP_005621582.1">
    <property type="nucleotide sequence ID" value="NC_004578.1"/>
</dbReference>
<dbReference type="SMR" id="Q87UH3"/>
<dbReference type="STRING" id="223283.PSPTO_5324"/>
<dbReference type="GeneID" id="61791076"/>
<dbReference type="KEGG" id="pst:PSPTO_5324"/>
<dbReference type="PATRIC" id="fig|223283.9.peg.5451"/>
<dbReference type="eggNOG" id="COG1952">
    <property type="taxonomic scope" value="Bacteria"/>
</dbReference>
<dbReference type="HOGENOM" id="CLU_111574_1_0_6"/>
<dbReference type="OrthoDB" id="9795145at2"/>
<dbReference type="PhylomeDB" id="Q87UH3"/>
<dbReference type="Proteomes" id="UP000002515">
    <property type="component" value="Chromosome"/>
</dbReference>
<dbReference type="GO" id="GO:0005737">
    <property type="term" value="C:cytoplasm"/>
    <property type="evidence" value="ECO:0007669"/>
    <property type="project" value="UniProtKB-SubCell"/>
</dbReference>
<dbReference type="GO" id="GO:0051082">
    <property type="term" value="F:unfolded protein binding"/>
    <property type="evidence" value="ECO:0007669"/>
    <property type="project" value="InterPro"/>
</dbReference>
<dbReference type="GO" id="GO:0006457">
    <property type="term" value="P:protein folding"/>
    <property type="evidence" value="ECO:0007669"/>
    <property type="project" value="UniProtKB-UniRule"/>
</dbReference>
<dbReference type="GO" id="GO:0051262">
    <property type="term" value="P:protein tetramerization"/>
    <property type="evidence" value="ECO:0007669"/>
    <property type="project" value="InterPro"/>
</dbReference>
<dbReference type="GO" id="GO:0015031">
    <property type="term" value="P:protein transport"/>
    <property type="evidence" value="ECO:0007669"/>
    <property type="project" value="UniProtKB-UniRule"/>
</dbReference>
<dbReference type="Gene3D" id="3.10.420.10">
    <property type="entry name" value="SecB-like"/>
    <property type="match status" value="1"/>
</dbReference>
<dbReference type="HAMAP" id="MF_00821">
    <property type="entry name" value="SecB"/>
    <property type="match status" value="1"/>
</dbReference>
<dbReference type="InterPro" id="IPR003708">
    <property type="entry name" value="SecB"/>
</dbReference>
<dbReference type="InterPro" id="IPR035958">
    <property type="entry name" value="SecB-like_sf"/>
</dbReference>
<dbReference type="NCBIfam" id="NF004393">
    <property type="entry name" value="PRK05751.1-4"/>
    <property type="match status" value="1"/>
</dbReference>
<dbReference type="NCBIfam" id="TIGR00809">
    <property type="entry name" value="secB"/>
    <property type="match status" value="1"/>
</dbReference>
<dbReference type="PANTHER" id="PTHR36918">
    <property type="match status" value="1"/>
</dbReference>
<dbReference type="PANTHER" id="PTHR36918:SF1">
    <property type="entry name" value="PROTEIN-EXPORT PROTEIN SECB"/>
    <property type="match status" value="1"/>
</dbReference>
<dbReference type="Pfam" id="PF02556">
    <property type="entry name" value="SecB"/>
    <property type="match status" value="1"/>
</dbReference>
<dbReference type="PRINTS" id="PR01594">
    <property type="entry name" value="SECBCHAPRONE"/>
</dbReference>
<dbReference type="SUPFAM" id="SSF54611">
    <property type="entry name" value="SecB-like"/>
    <property type="match status" value="1"/>
</dbReference>
<keyword id="KW-0143">Chaperone</keyword>
<keyword id="KW-0963">Cytoplasm</keyword>
<keyword id="KW-0653">Protein transport</keyword>
<keyword id="KW-1185">Reference proteome</keyword>
<keyword id="KW-0811">Translocation</keyword>
<keyword id="KW-0813">Transport</keyword>
<accession>Q87UH3</accession>
<protein>
    <recommendedName>
        <fullName evidence="1">Protein-export protein SecB</fullName>
    </recommendedName>
</protein>